<sequence length="129" mass="13666">MSIPADLKYTQSHEWVRAEADGSVTVGITHHAQDLLGDMVFIENPAVGRTLAKGEECAVVESVKAASDVYAPVAGEVIAANGEVESSPESVNQDAYTAWLFKIKPANPADVDALLDAAAYQKVVESEAH</sequence>
<organism>
    <name type="scientific">Thiobacillus denitrificans (strain ATCC 25259 / T1)</name>
    <dbReference type="NCBI Taxonomy" id="292415"/>
    <lineage>
        <taxon>Bacteria</taxon>
        <taxon>Pseudomonadati</taxon>
        <taxon>Pseudomonadota</taxon>
        <taxon>Betaproteobacteria</taxon>
        <taxon>Nitrosomonadales</taxon>
        <taxon>Thiobacillaceae</taxon>
        <taxon>Thiobacillus</taxon>
    </lineage>
</organism>
<comment type="function">
    <text evidence="1">The glycine cleavage system catalyzes the degradation of glycine. The H protein shuttles the methylamine group of glycine from the P protein to the T protein.</text>
</comment>
<comment type="cofactor">
    <cofactor evidence="1">
        <name>(R)-lipoate</name>
        <dbReference type="ChEBI" id="CHEBI:83088"/>
    </cofactor>
    <text evidence="1">Binds 1 lipoyl cofactor covalently.</text>
</comment>
<comment type="subunit">
    <text evidence="1">The glycine cleavage system is composed of four proteins: P, T, L and H.</text>
</comment>
<comment type="similarity">
    <text evidence="1">Belongs to the GcvH family.</text>
</comment>
<dbReference type="EMBL" id="CP000116">
    <property type="protein sequence ID" value="AAZ96130.1"/>
    <property type="molecule type" value="Genomic_DNA"/>
</dbReference>
<dbReference type="RefSeq" id="WP_011310690.1">
    <property type="nucleotide sequence ID" value="NC_007404.1"/>
</dbReference>
<dbReference type="SMR" id="Q3SMB7"/>
<dbReference type="STRING" id="292415.Tbd_0177"/>
<dbReference type="KEGG" id="tbd:Tbd_0177"/>
<dbReference type="eggNOG" id="COG0509">
    <property type="taxonomic scope" value="Bacteria"/>
</dbReference>
<dbReference type="HOGENOM" id="CLU_097408_2_1_4"/>
<dbReference type="OrthoDB" id="9796712at2"/>
<dbReference type="Proteomes" id="UP000008291">
    <property type="component" value="Chromosome"/>
</dbReference>
<dbReference type="GO" id="GO:0005829">
    <property type="term" value="C:cytosol"/>
    <property type="evidence" value="ECO:0007669"/>
    <property type="project" value="TreeGrafter"/>
</dbReference>
<dbReference type="GO" id="GO:0005960">
    <property type="term" value="C:glycine cleavage complex"/>
    <property type="evidence" value="ECO:0007669"/>
    <property type="project" value="InterPro"/>
</dbReference>
<dbReference type="GO" id="GO:0019464">
    <property type="term" value="P:glycine decarboxylation via glycine cleavage system"/>
    <property type="evidence" value="ECO:0007669"/>
    <property type="project" value="UniProtKB-UniRule"/>
</dbReference>
<dbReference type="CDD" id="cd06848">
    <property type="entry name" value="GCS_H"/>
    <property type="match status" value="1"/>
</dbReference>
<dbReference type="Gene3D" id="2.40.50.100">
    <property type="match status" value="1"/>
</dbReference>
<dbReference type="HAMAP" id="MF_00272">
    <property type="entry name" value="GcvH"/>
    <property type="match status" value="1"/>
</dbReference>
<dbReference type="InterPro" id="IPR003016">
    <property type="entry name" value="2-oxoA_DH_lipoyl-BS"/>
</dbReference>
<dbReference type="InterPro" id="IPR000089">
    <property type="entry name" value="Biotin_lipoyl"/>
</dbReference>
<dbReference type="InterPro" id="IPR002930">
    <property type="entry name" value="GCV_H"/>
</dbReference>
<dbReference type="InterPro" id="IPR033753">
    <property type="entry name" value="GCV_H/Fam206"/>
</dbReference>
<dbReference type="InterPro" id="IPR017453">
    <property type="entry name" value="GCV_H_sub"/>
</dbReference>
<dbReference type="InterPro" id="IPR011053">
    <property type="entry name" value="Single_hybrid_motif"/>
</dbReference>
<dbReference type="NCBIfam" id="TIGR00527">
    <property type="entry name" value="gcvH"/>
    <property type="match status" value="1"/>
</dbReference>
<dbReference type="NCBIfam" id="NF002270">
    <property type="entry name" value="PRK01202.1"/>
    <property type="match status" value="1"/>
</dbReference>
<dbReference type="PANTHER" id="PTHR11715">
    <property type="entry name" value="GLYCINE CLEAVAGE SYSTEM H PROTEIN"/>
    <property type="match status" value="1"/>
</dbReference>
<dbReference type="PANTHER" id="PTHR11715:SF3">
    <property type="entry name" value="GLYCINE CLEAVAGE SYSTEM H PROTEIN-RELATED"/>
    <property type="match status" value="1"/>
</dbReference>
<dbReference type="Pfam" id="PF01597">
    <property type="entry name" value="GCV_H"/>
    <property type="match status" value="1"/>
</dbReference>
<dbReference type="SUPFAM" id="SSF51230">
    <property type="entry name" value="Single hybrid motif"/>
    <property type="match status" value="1"/>
</dbReference>
<dbReference type="PROSITE" id="PS50968">
    <property type="entry name" value="BIOTINYL_LIPOYL"/>
    <property type="match status" value="1"/>
</dbReference>
<dbReference type="PROSITE" id="PS00189">
    <property type="entry name" value="LIPOYL"/>
    <property type="match status" value="1"/>
</dbReference>
<feature type="chain" id="PRO_0000302459" description="Glycine cleavage system H protein">
    <location>
        <begin position="1"/>
        <end position="129"/>
    </location>
</feature>
<feature type="domain" description="Lipoyl-binding" evidence="2">
    <location>
        <begin position="23"/>
        <end position="104"/>
    </location>
</feature>
<feature type="modified residue" description="N6-lipoyllysine" evidence="1">
    <location>
        <position position="64"/>
    </location>
</feature>
<keyword id="KW-0450">Lipoyl</keyword>
<keyword id="KW-1185">Reference proteome</keyword>
<reference key="1">
    <citation type="journal article" date="2006" name="J. Bacteriol.">
        <title>The genome sequence of the obligately chemolithoautotrophic, facultatively anaerobic bacterium Thiobacillus denitrificans.</title>
        <authorList>
            <person name="Beller H.R."/>
            <person name="Chain P.S."/>
            <person name="Letain T.E."/>
            <person name="Chakicherla A."/>
            <person name="Larimer F.W."/>
            <person name="Richardson P.M."/>
            <person name="Coleman M.A."/>
            <person name="Wood A.P."/>
            <person name="Kelly D.P."/>
        </authorList>
    </citation>
    <scope>NUCLEOTIDE SEQUENCE [LARGE SCALE GENOMIC DNA]</scope>
    <source>
        <strain>ATCC 25259 / T1</strain>
    </source>
</reference>
<proteinExistence type="inferred from homology"/>
<evidence type="ECO:0000255" key="1">
    <source>
        <dbReference type="HAMAP-Rule" id="MF_00272"/>
    </source>
</evidence>
<evidence type="ECO:0000255" key="2">
    <source>
        <dbReference type="PROSITE-ProRule" id="PRU01066"/>
    </source>
</evidence>
<gene>
    <name evidence="1" type="primary">gcvH</name>
    <name type="ordered locus">Tbd_0177</name>
</gene>
<protein>
    <recommendedName>
        <fullName evidence="1">Glycine cleavage system H protein</fullName>
    </recommendedName>
</protein>
<name>GCSH_THIDA</name>
<accession>Q3SMB7</accession>